<reference key="1">
    <citation type="submission" date="2003-06" db="EMBL/GenBank/DDBJ databases">
        <title>The complete genome sequence of Haemophilus ducreyi.</title>
        <authorList>
            <person name="Munson R.S. Jr."/>
            <person name="Ray W.C."/>
            <person name="Mahairas G."/>
            <person name="Sabo P."/>
            <person name="Mungur R."/>
            <person name="Johnson L."/>
            <person name="Nguyen D."/>
            <person name="Wang J."/>
            <person name="Forst C."/>
            <person name="Hood L."/>
        </authorList>
    </citation>
    <scope>NUCLEOTIDE SEQUENCE [LARGE SCALE GENOMIC DNA]</scope>
    <source>
        <strain>35000HP / ATCC 700724</strain>
    </source>
</reference>
<protein>
    <recommendedName>
        <fullName evidence="1">Beta-ketoacyl-[acyl-carrier-protein] synthase III</fullName>
        <shortName evidence="1">Beta-ketoacyl-ACP synthase III</shortName>
        <shortName evidence="1">KAS III</shortName>
        <ecNumber evidence="1">2.3.1.180</ecNumber>
    </recommendedName>
    <alternativeName>
        <fullName evidence="1">3-oxoacyl-[acyl-carrier-protein] synthase 3</fullName>
    </alternativeName>
    <alternativeName>
        <fullName evidence="1">3-oxoacyl-[acyl-carrier-protein] synthase III</fullName>
    </alternativeName>
</protein>
<feature type="chain" id="PRO_0000110431" description="Beta-ketoacyl-[acyl-carrier-protein] synthase III">
    <location>
        <begin position="1"/>
        <end position="316"/>
    </location>
</feature>
<feature type="region of interest" description="ACP-binding" evidence="1">
    <location>
        <begin position="244"/>
        <end position="248"/>
    </location>
</feature>
<feature type="active site" evidence="1">
    <location>
        <position position="112"/>
    </location>
</feature>
<feature type="active site" evidence="1">
    <location>
        <position position="243"/>
    </location>
</feature>
<feature type="active site" evidence="1">
    <location>
        <position position="273"/>
    </location>
</feature>
<name>FABH_HAEDU</name>
<comment type="function">
    <text evidence="1">Catalyzes the condensation reaction of fatty acid synthesis by the addition to an acyl acceptor of two carbons from malonyl-ACP. Catalyzes the first condensation reaction which initiates fatty acid synthesis and may therefore play a role in governing the total rate of fatty acid production. Possesses both acetoacetyl-ACP synthase and acetyl transacylase activities. Its substrate specificity determines the biosynthesis of branched-chain and/or straight-chain of fatty acids.</text>
</comment>
<comment type="catalytic activity">
    <reaction evidence="1">
        <text>malonyl-[ACP] + acetyl-CoA + H(+) = 3-oxobutanoyl-[ACP] + CO2 + CoA</text>
        <dbReference type="Rhea" id="RHEA:12080"/>
        <dbReference type="Rhea" id="RHEA-COMP:9623"/>
        <dbReference type="Rhea" id="RHEA-COMP:9625"/>
        <dbReference type="ChEBI" id="CHEBI:15378"/>
        <dbReference type="ChEBI" id="CHEBI:16526"/>
        <dbReference type="ChEBI" id="CHEBI:57287"/>
        <dbReference type="ChEBI" id="CHEBI:57288"/>
        <dbReference type="ChEBI" id="CHEBI:78449"/>
        <dbReference type="ChEBI" id="CHEBI:78450"/>
        <dbReference type="EC" id="2.3.1.180"/>
    </reaction>
</comment>
<comment type="pathway">
    <text evidence="1">Lipid metabolism; fatty acid biosynthesis.</text>
</comment>
<comment type="subunit">
    <text evidence="1">Homodimer.</text>
</comment>
<comment type="subcellular location">
    <subcellularLocation>
        <location evidence="1">Cytoplasm</location>
    </subcellularLocation>
</comment>
<comment type="domain">
    <text evidence="1">The last Arg residue of the ACP-binding site is essential for the weak association between ACP/AcpP and FabH.</text>
</comment>
<comment type="similarity">
    <text evidence="1">Belongs to the thiolase-like superfamily. FabH family.</text>
</comment>
<proteinExistence type="inferred from homology"/>
<sequence length="316" mass="33770">MYSKILATGSYLPKQVRSNADLEKMVDTTDEWIFTRSGMKERRIAAADETVATMGAAAAHKACEMAAIDVNEIELIVVATTTHSHAYPSAACQIQGMLAIEDAIAFDVAAACTGFIYALSVADQFIRAGKVKTAFVVGADVNSRVLDEADRGTVVLFGDGAGAVILQASEQAGILSTHLHSSADTDNMLALPIQERGNAQSGFIQMQGNATFKLAVSRLANVVEETLQANNLQKADLDWLVPHQANIRIIAATAKKLEMEMSQVVLTVEKYGNNSAATVPVALDEAVRDGRIQRGQLLLLEAFGGGWTWGSGLVRF</sequence>
<evidence type="ECO:0000255" key="1">
    <source>
        <dbReference type="HAMAP-Rule" id="MF_01815"/>
    </source>
</evidence>
<gene>
    <name evidence="1" type="primary">fabH</name>
    <name type="ordered locus">HD_0774</name>
</gene>
<dbReference type="EC" id="2.3.1.180" evidence="1"/>
<dbReference type="EMBL" id="AE017143">
    <property type="protein sequence ID" value="AAP95679.1"/>
    <property type="molecule type" value="Genomic_DNA"/>
</dbReference>
<dbReference type="RefSeq" id="WP_010944729.1">
    <property type="nucleotide sequence ID" value="NC_002940.2"/>
</dbReference>
<dbReference type="SMR" id="Q7U337"/>
<dbReference type="STRING" id="233412.HD_0774"/>
<dbReference type="KEGG" id="hdu:HD_0774"/>
<dbReference type="eggNOG" id="COG0332">
    <property type="taxonomic scope" value="Bacteria"/>
</dbReference>
<dbReference type="HOGENOM" id="CLU_039592_3_1_6"/>
<dbReference type="OrthoDB" id="9815506at2"/>
<dbReference type="UniPathway" id="UPA00094"/>
<dbReference type="Proteomes" id="UP000001022">
    <property type="component" value="Chromosome"/>
</dbReference>
<dbReference type="GO" id="GO:0005737">
    <property type="term" value="C:cytoplasm"/>
    <property type="evidence" value="ECO:0007669"/>
    <property type="project" value="UniProtKB-SubCell"/>
</dbReference>
<dbReference type="GO" id="GO:0004315">
    <property type="term" value="F:3-oxoacyl-[acyl-carrier-protein] synthase activity"/>
    <property type="evidence" value="ECO:0007669"/>
    <property type="project" value="InterPro"/>
</dbReference>
<dbReference type="GO" id="GO:0033818">
    <property type="term" value="F:beta-ketoacyl-acyl-carrier-protein synthase III activity"/>
    <property type="evidence" value="ECO:0007669"/>
    <property type="project" value="UniProtKB-UniRule"/>
</dbReference>
<dbReference type="GO" id="GO:0006633">
    <property type="term" value="P:fatty acid biosynthetic process"/>
    <property type="evidence" value="ECO:0007669"/>
    <property type="project" value="UniProtKB-UniRule"/>
</dbReference>
<dbReference type="CDD" id="cd00830">
    <property type="entry name" value="KAS_III"/>
    <property type="match status" value="1"/>
</dbReference>
<dbReference type="FunFam" id="3.40.47.10:FF:000004">
    <property type="entry name" value="3-oxoacyl-[acyl-carrier-protein] synthase 3"/>
    <property type="match status" value="1"/>
</dbReference>
<dbReference type="Gene3D" id="3.40.47.10">
    <property type="match status" value="2"/>
</dbReference>
<dbReference type="HAMAP" id="MF_01815">
    <property type="entry name" value="FabH"/>
    <property type="match status" value="1"/>
</dbReference>
<dbReference type="InterPro" id="IPR013747">
    <property type="entry name" value="ACP_syn_III_C"/>
</dbReference>
<dbReference type="InterPro" id="IPR013751">
    <property type="entry name" value="ACP_syn_III_N"/>
</dbReference>
<dbReference type="InterPro" id="IPR004655">
    <property type="entry name" value="FabH"/>
</dbReference>
<dbReference type="InterPro" id="IPR016039">
    <property type="entry name" value="Thiolase-like"/>
</dbReference>
<dbReference type="NCBIfam" id="TIGR00747">
    <property type="entry name" value="fabH"/>
    <property type="match status" value="1"/>
</dbReference>
<dbReference type="NCBIfam" id="NF006829">
    <property type="entry name" value="PRK09352.1"/>
    <property type="match status" value="1"/>
</dbReference>
<dbReference type="PANTHER" id="PTHR43091">
    <property type="entry name" value="3-OXOACYL-[ACYL-CARRIER-PROTEIN] SYNTHASE"/>
    <property type="match status" value="1"/>
</dbReference>
<dbReference type="PANTHER" id="PTHR43091:SF1">
    <property type="entry name" value="BETA-KETOACYL-[ACYL-CARRIER-PROTEIN] SYNTHASE III, CHLOROPLASTIC"/>
    <property type="match status" value="1"/>
</dbReference>
<dbReference type="Pfam" id="PF08545">
    <property type="entry name" value="ACP_syn_III"/>
    <property type="match status" value="1"/>
</dbReference>
<dbReference type="Pfam" id="PF08541">
    <property type="entry name" value="ACP_syn_III_C"/>
    <property type="match status" value="1"/>
</dbReference>
<dbReference type="SUPFAM" id="SSF53901">
    <property type="entry name" value="Thiolase-like"/>
    <property type="match status" value="1"/>
</dbReference>
<accession>Q7U337</accession>
<organism>
    <name type="scientific">Haemophilus ducreyi (strain 35000HP / ATCC 700724)</name>
    <dbReference type="NCBI Taxonomy" id="233412"/>
    <lineage>
        <taxon>Bacteria</taxon>
        <taxon>Pseudomonadati</taxon>
        <taxon>Pseudomonadota</taxon>
        <taxon>Gammaproteobacteria</taxon>
        <taxon>Pasteurellales</taxon>
        <taxon>Pasteurellaceae</taxon>
        <taxon>Haemophilus</taxon>
    </lineage>
</organism>
<keyword id="KW-0012">Acyltransferase</keyword>
<keyword id="KW-0963">Cytoplasm</keyword>
<keyword id="KW-0275">Fatty acid biosynthesis</keyword>
<keyword id="KW-0276">Fatty acid metabolism</keyword>
<keyword id="KW-0444">Lipid biosynthesis</keyword>
<keyword id="KW-0443">Lipid metabolism</keyword>
<keyword id="KW-0511">Multifunctional enzyme</keyword>
<keyword id="KW-1185">Reference proteome</keyword>
<keyword id="KW-0808">Transferase</keyword>